<sequence>MITQIRVDDRLVHGQVAVVWTKELNAPLLVVANDEAAKNEITQMTLKMAVPNGMKLLIRSVEDSIKLFNDPRATDKRIFVIVNSVKDACAIAKEVPDLEAVNVANVGRFDKSDPASKVKVTPSLLLNPEEMAAAKELVSLPELDVFNQVLPSNTKVHLSQLVN</sequence>
<keyword id="KW-0963">Cytoplasm</keyword>
<keyword id="KW-0903">Direct protein sequencing</keyword>
<keyword id="KW-0418">Kinase</keyword>
<keyword id="KW-0598">Phosphotransferase system</keyword>
<keyword id="KW-0762">Sugar transport</keyword>
<keyword id="KW-0808">Transferase</keyword>
<keyword id="KW-0813">Transport</keyword>
<dbReference type="EC" id="2.7.1.-"/>
<dbReference type="EMBL" id="CP000003">
    <property type="protein sequence ID" value="AAT86936.1"/>
    <property type="molecule type" value="Genomic_DNA"/>
</dbReference>
<dbReference type="RefSeq" id="WP_011184474.1">
    <property type="nucleotide sequence ID" value="NC_006086.1"/>
</dbReference>
<dbReference type="SMR" id="Q5XCC7"/>
<dbReference type="KEGG" id="spa:M6_Spy0801"/>
<dbReference type="HOGENOM" id="CLU_116175_2_0_9"/>
<dbReference type="Proteomes" id="UP000001167">
    <property type="component" value="Chromosome"/>
</dbReference>
<dbReference type="GO" id="GO:0005737">
    <property type="term" value="C:cytoplasm"/>
    <property type="evidence" value="ECO:0007669"/>
    <property type="project" value="UniProtKB-SubCell"/>
</dbReference>
<dbReference type="GO" id="GO:0016301">
    <property type="term" value="F:kinase activity"/>
    <property type="evidence" value="ECO:0007669"/>
    <property type="project" value="UniProtKB-KW"/>
</dbReference>
<dbReference type="GO" id="GO:0008982">
    <property type="term" value="F:protein-N(PI)-phosphohistidine-sugar phosphotransferase activity"/>
    <property type="evidence" value="ECO:0007669"/>
    <property type="project" value="InterPro"/>
</dbReference>
<dbReference type="GO" id="GO:0009401">
    <property type="term" value="P:phosphoenolpyruvate-dependent sugar phosphotransferase system"/>
    <property type="evidence" value="ECO:0007669"/>
    <property type="project" value="UniProtKB-KW"/>
</dbReference>
<dbReference type="Gene3D" id="3.40.35.10">
    <property type="entry name" value="Phosphotransferase system, sorbose subfamily IIB component"/>
    <property type="match status" value="1"/>
</dbReference>
<dbReference type="InterPro" id="IPR004720">
    <property type="entry name" value="PTS_IIB_sorbose-sp"/>
</dbReference>
<dbReference type="InterPro" id="IPR036667">
    <property type="entry name" value="PTS_IIB_sorbose-sp_sf"/>
</dbReference>
<dbReference type="Pfam" id="PF03830">
    <property type="entry name" value="PTSIIB_sorb"/>
    <property type="match status" value="1"/>
</dbReference>
<dbReference type="SUPFAM" id="SSF52728">
    <property type="entry name" value="PTS IIb component"/>
    <property type="match status" value="1"/>
</dbReference>
<dbReference type="PROSITE" id="PS51101">
    <property type="entry name" value="PTS_EIIB_TYPE_4"/>
    <property type="match status" value="1"/>
</dbReference>
<protein>
    <recommendedName>
        <fullName>Probable phosphotransferase enzyme IIB component M6_Spy0801</fullName>
        <ecNumber>2.7.1.-</ecNumber>
    </recommendedName>
    <alternativeName>
        <fullName>PTS system EIIB component</fullName>
    </alternativeName>
</protein>
<reference evidence="6" key="1">
    <citation type="journal article" date="2004" name="J. Infect. Dis.">
        <title>Progress toward characterization of the group A Streptococcus metagenome: complete genome sequence of a macrolide-resistant serotype M6 strain.</title>
        <authorList>
            <person name="Banks D.J."/>
            <person name="Porcella S.F."/>
            <person name="Barbian K.D."/>
            <person name="Beres S.B."/>
            <person name="Philips L.E."/>
            <person name="Voyich J.M."/>
            <person name="DeLeo F.R."/>
            <person name="Martin J.M."/>
            <person name="Somerville G.A."/>
            <person name="Musser J.M."/>
        </authorList>
    </citation>
    <scope>NUCLEOTIDE SEQUENCE [LARGE SCALE GENOMIC DNA]</scope>
    <source>
        <strain>ATCC BAA-946 / MGAS10394</strain>
    </source>
</reference>
<reference evidence="5" key="2">
    <citation type="submission" date="2000-05" db="UniProtKB">
        <title>Two-dimensional gel electrophoresis map of Streptococcus pyogenes proteins.</title>
        <authorList>
            <person name="Hogan D.A."/>
            <person name="Du P."/>
            <person name="Stevenson T.I."/>
            <person name="Whitton M."/>
            <person name="Kilby G.W."/>
            <person name="Rogers J."/>
            <person name="VanBogelen R.A."/>
        </authorList>
    </citation>
    <scope>PROTEIN SEQUENCE OF 23-47; 94-108 AND 120-135</scope>
    <scope>MASS SPECTROMETRY</scope>
    <source>
        <strain evidence="4">JRS4 / Serotype M6</strain>
    </source>
</reference>
<comment type="function">
    <text evidence="1">The phosphoenolpyruvate-dependent sugar phosphotransferase system (sugar PTS), a major carbohydrate active -transport system, catalyzes the phosphorylation of incoming sugar substrates concomitantly with their translocation across the cell membrane.</text>
</comment>
<comment type="subcellular location">
    <subcellularLocation>
        <location evidence="2">Cytoplasm</location>
    </subcellularLocation>
</comment>
<comment type="domain">
    <text evidence="5">The EIIB domain is phosphorylated by phospho-EIIA on a cysteinyl or histidyl residue, depending on the transported sugar. Then, it transfers the phosphoryl group to the sugar substrate concomitantly with the sugar uptake processed by the EIIC domain.</text>
</comment>
<comment type="mass spectrometry"/>
<accession>Q5XCC7</accession>
<accession>P82567</accession>
<gene>
    <name type="ordered locus">M6_Spy0801</name>
</gene>
<name>Y801_STRP6</name>
<evidence type="ECO:0000250" key="1"/>
<evidence type="ECO:0000250" key="2">
    <source>
        <dbReference type="UniProtKB" id="P37081"/>
    </source>
</evidence>
<evidence type="ECO:0000255" key="3">
    <source>
        <dbReference type="PROSITE-ProRule" id="PRU00424"/>
    </source>
</evidence>
<evidence type="ECO:0000269" key="4">
    <source ref="2"/>
</evidence>
<evidence type="ECO:0000305" key="5"/>
<evidence type="ECO:0000312" key="6">
    <source>
        <dbReference type="EMBL" id="AAT86936.1"/>
    </source>
</evidence>
<organism>
    <name type="scientific">Streptococcus pyogenes serotype M6 (strain ATCC BAA-946 / MGAS10394)</name>
    <dbReference type="NCBI Taxonomy" id="286636"/>
    <lineage>
        <taxon>Bacteria</taxon>
        <taxon>Bacillati</taxon>
        <taxon>Bacillota</taxon>
        <taxon>Bacilli</taxon>
        <taxon>Lactobacillales</taxon>
        <taxon>Streptococcaceae</taxon>
        <taxon>Streptococcus</taxon>
    </lineage>
</organism>
<proteinExistence type="evidence at protein level"/>
<feature type="chain" id="PRO_0000259702" description="Probable phosphotransferase enzyme IIB component M6_Spy0801">
    <location>
        <begin position="1"/>
        <end position="163"/>
    </location>
</feature>
<feature type="domain" description="PTS EIIB type-4" evidence="3">
    <location>
        <begin position="1"/>
        <end position="163"/>
    </location>
</feature>
<feature type="active site" description="Pros-phosphohistidine intermediate" evidence="1">
    <location>
        <position position="13"/>
    </location>
</feature>